<sequence length="248" mass="26747">MAGHSKWANIKHKKAKEDAKRGKIFTKIIRELVSATKQGDPDPESNPRLRAAVEKALSANMTKDTIKRAIERGAGNSDGGEMDELTYEGYGVGGVAVLVETMTDNVNRTVSEVRHAFTKFSGNLGTAGSVAYLFTKRGEIIFDDVSLEDEIMLVALDAGAVDIENDGESLLVITEPDTFGAVKDALDAAGYESSNAEVTMSPSTTALIDNIDDAEKVMKMIDMLEDLDDVQDVHTNVDFTDDVLAQLG</sequence>
<comment type="subcellular location">
    <subcellularLocation>
        <location evidence="1">Cytoplasm</location>
    </subcellularLocation>
</comment>
<comment type="similarity">
    <text evidence="1">Belongs to the TACO1 family.</text>
</comment>
<accession>A5WE72</accession>
<evidence type="ECO:0000255" key="1">
    <source>
        <dbReference type="HAMAP-Rule" id="MF_00693"/>
    </source>
</evidence>
<name>Y1013_PSYWF</name>
<feature type="chain" id="PRO_1000072756" description="Probable transcriptional regulatory protein PsycPRwf_1013">
    <location>
        <begin position="1"/>
        <end position="248"/>
    </location>
</feature>
<organism>
    <name type="scientific">Psychrobacter sp. (strain PRwf-1)</name>
    <dbReference type="NCBI Taxonomy" id="349106"/>
    <lineage>
        <taxon>Bacteria</taxon>
        <taxon>Pseudomonadati</taxon>
        <taxon>Pseudomonadota</taxon>
        <taxon>Gammaproteobacteria</taxon>
        <taxon>Moraxellales</taxon>
        <taxon>Moraxellaceae</taxon>
        <taxon>Psychrobacter</taxon>
    </lineage>
</organism>
<protein>
    <recommendedName>
        <fullName evidence="1">Probable transcriptional regulatory protein PsycPRwf_1013</fullName>
    </recommendedName>
</protein>
<proteinExistence type="inferred from homology"/>
<dbReference type="EMBL" id="CP000713">
    <property type="protein sequence ID" value="ABQ93963.1"/>
    <property type="molecule type" value="Genomic_DNA"/>
</dbReference>
<dbReference type="SMR" id="A5WE72"/>
<dbReference type="STRING" id="349106.PsycPRwf_1013"/>
<dbReference type="KEGG" id="prw:PsycPRwf_1013"/>
<dbReference type="eggNOG" id="COG0217">
    <property type="taxonomic scope" value="Bacteria"/>
</dbReference>
<dbReference type="HOGENOM" id="CLU_062974_2_2_6"/>
<dbReference type="GO" id="GO:0005829">
    <property type="term" value="C:cytosol"/>
    <property type="evidence" value="ECO:0007669"/>
    <property type="project" value="TreeGrafter"/>
</dbReference>
<dbReference type="GO" id="GO:0003677">
    <property type="term" value="F:DNA binding"/>
    <property type="evidence" value="ECO:0007669"/>
    <property type="project" value="UniProtKB-UniRule"/>
</dbReference>
<dbReference type="GO" id="GO:0006355">
    <property type="term" value="P:regulation of DNA-templated transcription"/>
    <property type="evidence" value="ECO:0007669"/>
    <property type="project" value="UniProtKB-UniRule"/>
</dbReference>
<dbReference type="FunFam" id="1.10.10.200:FF:000001">
    <property type="entry name" value="Probable transcriptional regulatory protein YebC"/>
    <property type="match status" value="1"/>
</dbReference>
<dbReference type="FunFam" id="3.30.70.980:FF:000002">
    <property type="entry name" value="Probable transcriptional regulatory protein YebC"/>
    <property type="match status" value="1"/>
</dbReference>
<dbReference type="Gene3D" id="1.10.10.200">
    <property type="match status" value="1"/>
</dbReference>
<dbReference type="Gene3D" id="3.30.70.980">
    <property type="match status" value="2"/>
</dbReference>
<dbReference type="HAMAP" id="MF_00693">
    <property type="entry name" value="Transcrip_reg_TACO1"/>
    <property type="match status" value="1"/>
</dbReference>
<dbReference type="InterPro" id="IPR017856">
    <property type="entry name" value="Integrase-like_N"/>
</dbReference>
<dbReference type="InterPro" id="IPR048300">
    <property type="entry name" value="TACO1_YebC-like_2nd/3rd_dom"/>
</dbReference>
<dbReference type="InterPro" id="IPR049083">
    <property type="entry name" value="TACO1_YebC_N"/>
</dbReference>
<dbReference type="InterPro" id="IPR002876">
    <property type="entry name" value="Transcrip_reg_TACO1-like"/>
</dbReference>
<dbReference type="InterPro" id="IPR026564">
    <property type="entry name" value="Transcrip_reg_TACO1-like_dom3"/>
</dbReference>
<dbReference type="InterPro" id="IPR029072">
    <property type="entry name" value="YebC-like"/>
</dbReference>
<dbReference type="NCBIfam" id="NF001030">
    <property type="entry name" value="PRK00110.1"/>
    <property type="match status" value="1"/>
</dbReference>
<dbReference type="NCBIfam" id="NF009044">
    <property type="entry name" value="PRK12378.1"/>
    <property type="match status" value="1"/>
</dbReference>
<dbReference type="NCBIfam" id="TIGR01033">
    <property type="entry name" value="YebC/PmpR family DNA-binding transcriptional regulator"/>
    <property type="match status" value="1"/>
</dbReference>
<dbReference type="PANTHER" id="PTHR12532:SF6">
    <property type="entry name" value="TRANSCRIPTIONAL REGULATORY PROTEIN YEBC-RELATED"/>
    <property type="match status" value="1"/>
</dbReference>
<dbReference type="PANTHER" id="PTHR12532">
    <property type="entry name" value="TRANSLATIONAL ACTIVATOR OF CYTOCHROME C OXIDASE 1"/>
    <property type="match status" value="1"/>
</dbReference>
<dbReference type="Pfam" id="PF20772">
    <property type="entry name" value="TACO1_YebC_N"/>
    <property type="match status" value="1"/>
</dbReference>
<dbReference type="Pfam" id="PF01709">
    <property type="entry name" value="Transcrip_reg"/>
    <property type="match status" value="1"/>
</dbReference>
<dbReference type="SUPFAM" id="SSF75625">
    <property type="entry name" value="YebC-like"/>
    <property type="match status" value="1"/>
</dbReference>
<reference key="1">
    <citation type="submission" date="2007-05" db="EMBL/GenBank/DDBJ databases">
        <title>Complete sequence of chromosome of Psychrobacter sp. PRwf-1.</title>
        <authorList>
            <consortium name="US DOE Joint Genome Institute"/>
            <person name="Copeland A."/>
            <person name="Lucas S."/>
            <person name="Lapidus A."/>
            <person name="Barry K."/>
            <person name="Detter J.C."/>
            <person name="Glavina del Rio T."/>
            <person name="Hammon N."/>
            <person name="Israni S."/>
            <person name="Dalin E."/>
            <person name="Tice H."/>
            <person name="Pitluck S."/>
            <person name="Chain P."/>
            <person name="Malfatti S."/>
            <person name="Shin M."/>
            <person name="Vergez L."/>
            <person name="Schmutz J."/>
            <person name="Larimer F."/>
            <person name="Land M."/>
            <person name="Hauser L."/>
            <person name="Kyrpides N."/>
            <person name="Kim E."/>
            <person name="Tiedje J."/>
            <person name="Richardson P."/>
        </authorList>
    </citation>
    <scope>NUCLEOTIDE SEQUENCE [LARGE SCALE GENOMIC DNA]</scope>
    <source>
        <strain>PRwf-1</strain>
    </source>
</reference>
<keyword id="KW-0963">Cytoplasm</keyword>
<keyword id="KW-0238">DNA-binding</keyword>
<keyword id="KW-0804">Transcription</keyword>
<keyword id="KW-0805">Transcription regulation</keyword>
<gene>
    <name type="ordered locus">PsycPRwf_1013</name>
</gene>